<feature type="chain" id="PRO_0000337959" description="Cell cycle protein GpsB">
    <location>
        <begin position="1"/>
        <end position="108"/>
    </location>
</feature>
<feature type="coiled-coil region" evidence="1">
    <location>
        <begin position="32"/>
        <end position="69"/>
    </location>
</feature>
<sequence>MTSIIYSPKDIFEQEFKTSMRGFDKKEVDEFLDNVIKDYENFNAQIEALKAENEALKKAKFQARNTVSATVQQPVPQPTRVAQSATNFDILKRISKLEKEVFGKQIIE</sequence>
<reference key="1">
    <citation type="journal article" date="2002" name="Proc. Natl. Acad. Sci. U.S.A.">
        <title>Genome sequence and comparative microarray analysis of serotype M18 group A Streptococcus strains associated with acute rheumatic fever outbreaks.</title>
        <authorList>
            <person name="Smoot J.C."/>
            <person name="Barbian K.D."/>
            <person name="Van Gompel J.J."/>
            <person name="Smoot L.M."/>
            <person name="Chaussee M.S."/>
            <person name="Sylva G.L."/>
            <person name="Sturdevant D.E."/>
            <person name="Ricklefs S.M."/>
            <person name="Porcella S.F."/>
            <person name="Parkins L.D."/>
            <person name="Beres S.B."/>
            <person name="Campbell D.S."/>
            <person name="Smith T.M."/>
            <person name="Zhang Q."/>
            <person name="Kapur V."/>
            <person name="Daly J.A."/>
            <person name="Veasy L.G."/>
            <person name="Musser J.M."/>
        </authorList>
    </citation>
    <scope>NUCLEOTIDE SEQUENCE [LARGE SCALE GENOMIC DNA]</scope>
    <source>
        <strain>MGAS8232</strain>
    </source>
</reference>
<organism>
    <name type="scientific">Streptococcus pyogenes serotype M18 (strain MGAS8232)</name>
    <dbReference type="NCBI Taxonomy" id="186103"/>
    <lineage>
        <taxon>Bacteria</taxon>
        <taxon>Bacillati</taxon>
        <taxon>Bacillota</taxon>
        <taxon>Bacilli</taxon>
        <taxon>Lactobacillales</taxon>
        <taxon>Streptococcaceae</taxon>
        <taxon>Streptococcus</taxon>
    </lineage>
</organism>
<proteinExistence type="inferred from homology"/>
<evidence type="ECO:0000255" key="1">
    <source>
        <dbReference type="HAMAP-Rule" id="MF_02011"/>
    </source>
</evidence>
<accession>Q7CMY7</accession>
<name>GPSB_STRP8</name>
<gene>
    <name evidence="1" type="primary">gpsB</name>
    <name type="ordered locus">spyM18_1658</name>
</gene>
<dbReference type="EMBL" id="AE009949">
    <property type="protein sequence ID" value="AAL98202.1"/>
    <property type="molecule type" value="Genomic_DNA"/>
</dbReference>
<dbReference type="RefSeq" id="WP_002983626.1">
    <property type="nucleotide sequence ID" value="NC_003485.1"/>
</dbReference>
<dbReference type="SMR" id="Q7CMY7"/>
<dbReference type="GeneID" id="69900485"/>
<dbReference type="KEGG" id="spm:spyM18_1658"/>
<dbReference type="HOGENOM" id="CLU_140309_1_0_9"/>
<dbReference type="GO" id="GO:0005737">
    <property type="term" value="C:cytoplasm"/>
    <property type="evidence" value="ECO:0007669"/>
    <property type="project" value="UniProtKB-SubCell"/>
</dbReference>
<dbReference type="GO" id="GO:0051301">
    <property type="term" value="P:cell division"/>
    <property type="evidence" value="ECO:0007669"/>
    <property type="project" value="UniProtKB-UniRule"/>
</dbReference>
<dbReference type="GO" id="GO:0008360">
    <property type="term" value="P:regulation of cell shape"/>
    <property type="evidence" value="ECO:0007669"/>
    <property type="project" value="UniProtKB-UniRule"/>
</dbReference>
<dbReference type="Gene3D" id="6.10.250.660">
    <property type="match status" value="1"/>
</dbReference>
<dbReference type="HAMAP" id="MF_02011">
    <property type="entry name" value="GpsB"/>
    <property type="match status" value="1"/>
</dbReference>
<dbReference type="InterPro" id="IPR011229">
    <property type="entry name" value="Cell_cycle_GpsB"/>
</dbReference>
<dbReference type="InterPro" id="IPR019933">
    <property type="entry name" value="DivIVA_domain"/>
</dbReference>
<dbReference type="InterPro" id="IPR007793">
    <property type="entry name" value="DivIVA_fam"/>
</dbReference>
<dbReference type="NCBIfam" id="TIGR03544">
    <property type="entry name" value="DivI1A_domain"/>
    <property type="match status" value="1"/>
</dbReference>
<dbReference type="NCBIfam" id="NF010725">
    <property type="entry name" value="PRK14127.1"/>
    <property type="match status" value="1"/>
</dbReference>
<dbReference type="PANTHER" id="PTHR35794:SF1">
    <property type="entry name" value="CELL CYCLE PROTEIN GPSB"/>
    <property type="match status" value="1"/>
</dbReference>
<dbReference type="PANTHER" id="PTHR35794">
    <property type="entry name" value="CELL DIVISION PROTEIN DIVIVA"/>
    <property type="match status" value="1"/>
</dbReference>
<dbReference type="Pfam" id="PF05103">
    <property type="entry name" value="DivIVA"/>
    <property type="match status" value="1"/>
</dbReference>
<dbReference type="PIRSF" id="PIRSF029938">
    <property type="entry name" value="UCP029938"/>
    <property type="match status" value="1"/>
</dbReference>
<keyword id="KW-0131">Cell cycle</keyword>
<keyword id="KW-0132">Cell division</keyword>
<keyword id="KW-0133">Cell shape</keyword>
<keyword id="KW-0175">Coiled coil</keyword>
<keyword id="KW-0963">Cytoplasm</keyword>
<protein>
    <recommendedName>
        <fullName evidence="1">Cell cycle protein GpsB</fullName>
    </recommendedName>
    <alternativeName>
        <fullName evidence="1">Guiding PBP1-shuttling protein</fullName>
    </alternativeName>
</protein>
<comment type="function">
    <text evidence="1">Divisome component that associates with the complex late in its assembly, after the Z-ring is formed, and is dependent on DivIC and PBP2B for its recruitment to the divisome. Together with EzrA, is a key component of the system that regulates PBP1 localization during cell cycle progression. Its main role could be the removal of PBP1 from the cell pole after pole maturation is completed. Also contributes to the recruitment of PBP1 to the division complex. Not essential for septum formation.</text>
</comment>
<comment type="subunit">
    <text evidence="1">Forms polymers through the coiled coil domains. Interacts with PBP1, MreC and EzrA.</text>
</comment>
<comment type="subcellular location">
    <subcellularLocation>
        <location evidence="1">Cytoplasm</location>
    </subcellularLocation>
    <text evidence="1">Shuttles between the lateral wall and the division site in a cell cycle-dependent manner.</text>
</comment>
<comment type="similarity">
    <text evidence="1">Belongs to the GpsB family.</text>
</comment>